<feature type="signal peptide" evidence="4">
    <location>
        <begin position="1"/>
        <end position="22"/>
    </location>
</feature>
<feature type="chain" id="PRO_0000390317" description="Beta-glucosidase 45">
    <location>
        <begin position="23"/>
        <end position="520"/>
    </location>
</feature>
<feature type="active site" description="Proton donor" evidence="2">
    <location>
        <position position="201"/>
    </location>
</feature>
<feature type="active site" description="Nucleophile" evidence="6">
    <location>
        <position position="417"/>
    </location>
</feature>
<feature type="binding site" evidence="2">
    <location>
        <position position="52"/>
    </location>
    <ligand>
        <name>a beta-D-glucoside</name>
        <dbReference type="ChEBI" id="CHEBI:22798"/>
    </ligand>
</feature>
<feature type="binding site" evidence="2">
    <location>
        <position position="155"/>
    </location>
    <ligand>
        <name>a beta-D-glucoside</name>
        <dbReference type="ChEBI" id="CHEBI:22798"/>
    </ligand>
</feature>
<feature type="binding site" evidence="2">
    <location>
        <begin position="200"/>
        <end position="201"/>
    </location>
    <ligand>
        <name>a beta-D-glucoside</name>
        <dbReference type="ChEBI" id="CHEBI:22798"/>
    </ligand>
</feature>
<feature type="binding site" evidence="2">
    <location>
        <position position="344"/>
    </location>
    <ligand>
        <name>a beta-D-glucoside</name>
        <dbReference type="ChEBI" id="CHEBI:22798"/>
    </ligand>
</feature>
<feature type="binding site" evidence="3">
    <location>
        <position position="417"/>
    </location>
    <ligand>
        <name>a beta-D-glucoside</name>
        <dbReference type="ChEBI" id="CHEBI:22798"/>
    </ligand>
</feature>
<feature type="binding site" evidence="2">
    <location>
        <position position="466"/>
    </location>
    <ligand>
        <name>a beta-D-glucoside</name>
        <dbReference type="ChEBI" id="CHEBI:22798"/>
    </ligand>
</feature>
<feature type="binding site" evidence="2">
    <location>
        <begin position="473"/>
        <end position="474"/>
    </location>
    <ligand>
        <name>a beta-D-glucoside</name>
        <dbReference type="ChEBI" id="CHEBI:22798"/>
    </ligand>
</feature>
<feature type="binding site" evidence="1">
    <location>
        <position position="482"/>
    </location>
    <ligand>
        <name>a beta-D-glucoside</name>
        <dbReference type="ChEBI" id="CHEBI:22798"/>
    </ligand>
</feature>
<feature type="glycosylation site" description="N-linked (GlcNAc...) asparagine" evidence="5">
    <location>
        <position position="3"/>
    </location>
</feature>
<feature type="glycosylation site" description="N-linked (GlcNAc...) asparagine" evidence="5">
    <location>
        <position position="226"/>
    </location>
</feature>
<feature type="glycosylation site" description="N-linked (GlcNAc...) asparagine" evidence="5">
    <location>
        <position position="378"/>
    </location>
</feature>
<feature type="glycosylation site" description="N-linked (GlcNAc...) asparagine" evidence="5">
    <location>
        <position position="435"/>
    </location>
</feature>
<feature type="disulfide bond" evidence="2">
    <location>
        <begin position="220"/>
        <end position="227"/>
    </location>
</feature>
<feature type="disulfide bond" evidence="2">
    <location>
        <begin position="352"/>
        <end position="357"/>
    </location>
</feature>
<accession>O80689</accession>
<gene>
    <name evidence="8" type="primary">BGLU45</name>
    <name evidence="10" type="ordered locus">At1g61810</name>
    <name evidence="11" type="ORF">F8K4.2</name>
    <name type="ORF">T13M11.19</name>
</gene>
<comment type="function">
    <text evidence="7">Hydrolyzes p-nitrophenyl beta-D-glucoside and natural glucosides such as syringin, coniferin and p-coumaryl alcohol glucoside. May be involved in lignification by hydrolyzing monolignol glucosides.</text>
</comment>
<comment type="catalytic activity">
    <reaction evidence="7">
        <text>Hydrolysis of terminal, non-reducing beta-D-glucosyl residues with release of beta-D-glucose.</text>
        <dbReference type="EC" id="3.2.1.21"/>
    </reaction>
</comment>
<comment type="biophysicochemical properties">
    <kinetics>
        <KM evidence="7">5.4 mM for syringin (at pH 5.5)</KM>
        <KM evidence="7">7 mM for coniferin (at pH 5.5)</KM>
    </kinetics>
</comment>
<comment type="alternative products">
    <event type="alternative splicing"/>
    <isoform>
        <id>O80689-1</id>
        <name>1</name>
        <sequence type="displayed"/>
    </isoform>
    <text>A number of isoforms are produced. According to EST sequences.</text>
</comment>
<comment type="tissue specificity">
    <text evidence="7">Expressed in stems and siliques.</text>
</comment>
<comment type="similarity">
    <text evidence="9">Belongs to the glycosyl hydrolase 1 family.</text>
</comment>
<proteinExistence type="evidence at protein level"/>
<keyword id="KW-0025">Alternative splicing</keyword>
<keyword id="KW-1015">Disulfide bond</keyword>
<keyword id="KW-0325">Glycoprotein</keyword>
<keyword id="KW-0326">Glycosidase</keyword>
<keyword id="KW-0378">Hydrolase</keyword>
<keyword id="KW-1185">Reference proteome</keyword>
<keyword id="KW-0732">Signal</keyword>
<protein>
    <recommendedName>
        <fullName evidence="8">Beta-glucosidase 45</fullName>
        <shortName evidence="8">AtBGLU45</shortName>
        <ecNumber evidence="7">3.2.1.21</ecNumber>
    </recommendedName>
</protein>
<name>BGL45_ARATH</name>
<organism>
    <name type="scientific">Arabidopsis thaliana</name>
    <name type="common">Mouse-ear cress</name>
    <dbReference type="NCBI Taxonomy" id="3702"/>
    <lineage>
        <taxon>Eukaryota</taxon>
        <taxon>Viridiplantae</taxon>
        <taxon>Streptophyta</taxon>
        <taxon>Embryophyta</taxon>
        <taxon>Tracheophyta</taxon>
        <taxon>Spermatophyta</taxon>
        <taxon>Magnoliopsida</taxon>
        <taxon>eudicotyledons</taxon>
        <taxon>Gunneridae</taxon>
        <taxon>Pentapetalae</taxon>
        <taxon>rosids</taxon>
        <taxon>malvids</taxon>
        <taxon>Brassicales</taxon>
        <taxon>Brassicaceae</taxon>
        <taxon>Camelineae</taxon>
        <taxon>Arabidopsis</taxon>
    </lineage>
</organism>
<sequence length="520" mass="59897">MKNLTSFVIVILLQSLLFHVYGRHQSSSKNILVDSSPFPSDFLFGTASSAYQYEGAFLTDGKSLNNWDVFTHKNPGKILDKNNADRAVDQYNRFLEDIQLMSFLGVNSYRFSISWCRILPRGRFGEINYLGIKYYNIFIDALISRGIKPFVTLNHVDYPQELEDRFQSWLNPEMQKEFGYLADICFKHFGNRVKYWTTLNEPNQQLILGYLTGKFPPSRCSSPYGNCSQGNSETEPFIAAHNMILAHAKAVNIYKTKYQKEQKGSIGIVVQTSWFEPISDSNADKEAAERAQSFYSNWILDPVIYGKYPKEMVDILGPALPQFSSNEVKNLEKSRADFVGINHYTSYFIQDCLTSACNTGHGAFKAEGYALKLDRKGNVTIGELTDVNWQHIDPTGFHKMLNYLKDRYPNMPMFITENGFGDLQKPETTDKELLNDTKRIQYMSGYLEALQAAMRDGANVKGYFVWSLLDNFEWLFGYKVRFGLFHVDLTTLKRSPKQSASWYKNYIEEHVNRRDIVDNY</sequence>
<evidence type="ECO:0000250" key="1">
    <source>
        <dbReference type="UniProtKB" id="Q1XH05"/>
    </source>
</evidence>
<evidence type="ECO:0000250" key="2">
    <source>
        <dbReference type="UniProtKB" id="Q7XSK0"/>
    </source>
</evidence>
<evidence type="ECO:0000250" key="3">
    <source>
        <dbReference type="UniProtKB" id="Q9SPP9"/>
    </source>
</evidence>
<evidence type="ECO:0000255" key="4"/>
<evidence type="ECO:0000255" key="5">
    <source>
        <dbReference type="PROSITE-ProRule" id="PRU00498"/>
    </source>
</evidence>
<evidence type="ECO:0000255" key="6">
    <source>
        <dbReference type="PROSITE-ProRule" id="PRU10055"/>
    </source>
</evidence>
<evidence type="ECO:0000269" key="7">
    <source>
    </source>
</evidence>
<evidence type="ECO:0000303" key="8">
    <source>
    </source>
</evidence>
<evidence type="ECO:0000305" key="9"/>
<evidence type="ECO:0000312" key="10">
    <source>
        <dbReference type="Araport" id="AT1G61810"/>
    </source>
</evidence>
<evidence type="ECO:0000312" key="11">
    <source>
        <dbReference type="EMBL" id="AAC28501.1"/>
    </source>
</evidence>
<dbReference type="EC" id="3.2.1.21" evidence="7"/>
<dbReference type="EMBL" id="AC004392">
    <property type="protein sequence ID" value="AAC28501.1"/>
    <property type="molecule type" value="Genomic_DNA"/>
</dbReference>
<dbReference type="EMBL" id="CP002684">
    <property type="protein sequence ID" value="AEE33890.1"/>
    <property type="molecule type" value="Genomic_DNA"/>
</dbReference>
<dbReference type="PIR" id="T02127">
    <property type="entry name" value="T02127"/>
</dbReference>
<dbReference type="RefSeq" id="NP_176374.1">
    <molecule id="O80689-1"/>
    <property type="nucleotide sequence ID" value="NM_104863.3"/>
</dbReference>
<dbReference type="SMR" id="O80689"/>
<dbReference type="FunCoup" id="O80689">
    <property type="interactions" value="195"/>
</dbReference>
<dbReference type="STRING" id="3702.O80689"/>
<dbReference type="CAZy" id="GH1">
    <property type="family name" value="Glycoside Hydrolase Family 1"/>
</dbReference>
<dbReference type="GlyCosmos" id="O80689">
    <property type="glycosylation" value="4 sites, No reported glycans"/>
</dbReference>
<dbReference type="GlyGen" id="O80689">
    <property type="glycosylation" value="4 sites"/>
</dbReference>
<dbReference type="PaxDb" id="3702-AT1G61810.3"/>
<dbReference type="ProteomicsDB" id="240373">
    <molecule id="O80689-1"/>
</dbReference>
<dbReference type="EnsemblPlants" id="AT1G61810.1">
    <molecule id="O80689-1"/>
    <property type="protein sequence ID" value="AT1G61810.1"/>
    <property type="gene ID" value="AT1G61810"/>
</dbReference>
<dbReference type="GeneID" id="842478"/>
<dbReference type="Gramene" id="AT1G61810.1">
    <molecule id="O80689-1"/>
    <property type="protein sequence ID" value="AT1G61810.1"/>
    <property type="gene ID" value="AT1G61810"/>
</dbReference>
<dbReference type="KEGG" id="ath:AT1G61810"/>
<dbReference type="Araport" id="AT1G61810"/>
<dbReference type="TAIR" id="AT1G61810">
    <property type="gene designation" value="BGLU45"/>
</dbReference>
<dbReference type="eggNOG" id="KOG0626">
    <property type="taxonomic scope" value="Eukaryota"/>
</dbReference>
<dbReference type="HOGENOM" id="CLU_001859_1_0_1"/>
<dbReference type="InParanoid" id="O80689"/>
<dbReference type="OMA" id="SLTAYWV"/>
<dbReference type="PhylomeDB" id="O80689"/>
<dbReference type="BioCyc" id="ARA:AT1G61810-MONOMER"/>
<dbReference type="SABIO-RK" id="O80689"/>
<dbReference type="PRO" id="PR:O80689"/>
<dbReference type="Proteomes" id="UP000006548">
    <property type="component" value="Chromosome 1"/>
</dbReference>
<dbReference type="ExpressionAtlas" id="O80689">
    <property type="expression patterns" value="baseline and differential"/>
</dbReference>
<dbReference type="GO" id="GO:0008422">
    <property type="term" value="F:beta-glucosidase activity"/>
    <property type="evidence" value="ECO:0000314"/>
    <property type="project" value="UniProtKB"/>
</dbReference>
<dbReference type="GO" id="GO:0047782">
    <property type="term" value="F:coniferin beta-glucosidase activity"/>
    <property type="evidence" value="ECO:0000314"/>
    <property type="project" value="UniProtKB"/>
</dbReference>
<dbReference type="GO" id="GO:0005975">
    <property type="term" value="P:carbohydrate metabolic process"/>
    <property type="evidence" value="ECO:0007669"/>
    <property type="project" value="InterPro"/>
</dbReference>
<dbReference type="FunFam" id="3.20.20.80:FF:000020">
    <property type="entry name" value="Beta-glucosidase 12"/>
    <property type="match status" value="1"/>
</dbReference>
<dbReference type="Gene3D" id="3.20.20.80">
    <property type="entry name" value="Glycosidases"/>
    <property type="match status" value="1"/>
</dbReference>
<dbReference type="InterPro" id="IPR001360">
    <property type="entry name" value="Glyco_hydro_1"/>
</dbReference>
<dbReference type="InterPro" id="IPR018120">
    <property type="entry name" value="Glyco_hydro_1_AS"/>
</dbReference>
<dbReference type="InterPro" id="IPR033132">
    <property type="entry name" value="Glyco_hydro_1_N_CS"/>
</dbReference>
<dbReference type="InterPro" id="IPR017853">
    <property type="entry name" value="Glycoside_hydrolase_SF"/>
</dbReference>
<dbReference type="PANTHER" id="PTHR10353:SF213">
    <property type="entry name" value="BETA-GLUCOSIDASE 45-RELATED"/>
    <property type="match status" value="1"/>
</dbReference>
<dbReference type="PANTHER" id="PTHR10353">
    <property type="entry name" value="GLYCOSYL HYDROLASE"/>
    <property type="match status" value="1"/>
</dbReference>
<dbReference type="Pfam" id="PF00232">
    <property type="entry name" value="Glyco_hydro_1"/>
    <property type="match status" value="1"/>
</dbReference>
<dbReference type="PRINTS" id="PR00131">
    <property type="entry name" value="GLHYDRLASE1"/>
</dbReference>
<dbReference type="SUPFAM" id="SSF51445">
    <property type="entry name" value="(Trans)glycosidases"/>
    <property type="match status" value="1"/>
</dbReference>
<dbReference type="PROSITE" id="PS00572">
    <property type="entry name" value="GLYCOSYL_HYDROL_F1_1"/>
    <property type="match status" value="1"/>
</dbReference>
<dbReference type="PROSITE" id="PS00653">
    <property type="entry name" value="GLYCOSYL_HYDROL_F1_2"/>
    <property type="match status" value="1"/>
</dbReference>
<reference key="1">
    <citation type="journal article" date="2000" name="Nature">
        <title>Sequence and analysis of chromosome 1 of the plant Arabidopsis thaliana.</title>
        <authorList>
            <person name="Theologis A."/>
            <person name="Ecker J.R."/>
            <person name="Palm C.J."/>
            <person name="Federspiel N.A."/>
            <person name="Kaul S."/>
            <person name="White O."/>
            <person name="Alonso J."/>
            <person name="Altafi H."/>
            <person name="Araujo R."/>
            <person name="Bowman C.L."/>
            <person name="Brooks S.Y."/>
            <person name="Buehler E."/>
            <person name="Chan A."/>
            <person name="Chao Q."/>
            <person name="Chen H."/>
            <person name="Cheuk R.F."/>
            <person name="Chin C.W."/>
            <person name="Chung M.K."/>
            <person name="Conn L."/>
            <person name="Conway A.B."/>
            <person name="Conway A.R."/>
            <person name="Creasy T.H."/>
            <person name="Dewar K."/>
            <person name="Dunn P."/>
            <person name="Etgu P."/>
            <person name="Feldblyum T.V."/>
            <person name="Feng J.-D."/>
            <person name="Fong B."/>
            <person name="Fujii C.Y."/>
            <person name="Gill J.E."/>
            <person name="Goldsmith A.D."/>
            <person name="Haas B."/>
            <person name="Hansen N.F."/>
            <person name="Hughes B."/>
            <person name="Huizar L."/>
            <person name="Hunter J.L."/>
            <person name="Jenkins J."/>
            <person name="Johnson-Hopson C."/>
            <person name="Khan S."/>
            <person name="Khaykin E."/>
            <person name="Kim C.J."/>
            <person name="Koo H.L."/>
            <person name="Kremenetskaia I."/>
            <person name="Kurtz D.B."/>
            <person name="Kwan A."/>
            <person name="Lam B."/>
            <person name="Langin-Hooper S."/>
            <person name="Lee A."/>
            <person name="Lee J.M."/>
            <person name="Lenz C.A."/>
            <person name="Li J.H."/>
            <person name="Li Y.-P."/>
            <person name="Lin X."/>
            <person name="Liu S.X."/>
            <person name="Liu Z.A."/>
            <person name="Luros J.S."/>
            <person name="Maiti R."/>
            <person name="Marziali A."/>
            <person name="Militscher J."/>
            <person name="Miranda M."/>
            <person name="Nguyen M."/>
            <person name="Nierman W.C."/>
            <person name="Osborne B.I."/>
            <person name="Pai G."/>
            <person name="Peterson J."/>
            <person name="Pham P.K."/>
            <person name="Rizzo M."/>
            <person name="Rooney T."/>
            <person name="Rowley D."/>
            <person name="Sakano H."/>
            <person name="Salzberg S.L."/>
            <person name="Schwartz J.R."/>
            <person name="Shinn P."/>
            <person name="Southwick A.M."/>
            <person name="Sun H."/>
            <person name="Tallon L.J."/>
            <person name="Tambunga G."/>
            <person name="Toriumi M.J."/>
            <person name="Town C.D."/>
            <person name="Utterback T."/>
            <person name="Van Aken S."/>
            <person name="Vaysberg M."/>
            <person name="Vysotskaia V.S."/>
            <person name="Walker M."/>
            <person name="Wu D."/>
            <person name="Yu G."/>
            <person name="Fraser C.M."/>
            <person name="Venter J.C."/>
            <person name="Davis R.W."/>
        </authorList>
    </citation>
    <scope>NUCLEOTIDE SEQUENCE [LARGE SCALE GENOMIC DNA]</scope>
    <source>
        <strain>cv. Columbia</strain>
    </source>
</reference>
<reference key="2">
    <citation type="journal article" date="2017" name="Plant J.">
        <title>Araport11: a complete reannotation of the Arabidopsis thaliana reference genome.</title>
        <authorList>
            <person name="Cheng C.Y."/>
            <person name="Krishnakumar V."/>
            <person name="Chan A.P."/>
            <person name="Thibaud-Nissen F."/>
            <person name="Schobel S."/>
            <person name="Town C.D."/>
        </authorList>
    </citation>
    <scope>GENOME REANNOTATION</scope>
    <source>
        <strain>cv. Columbia</strain>
    </source>
</reference>
<reference key="3">
    <citation type="journal article" date="2004" name="Plant Mol. Biol.">
        <title>Functional genomic analysis of Arabidopsis thaliana glycoside hydrolase family 1.</title>
        <authorList>
            <person name="Xu Z."/>
            <person name="Escamilla-Trevino L.L."/>
            <person name="Zeng L."/>
            <person name="Lalgondar M."/>
            <person name="Bevan D.R."/>
            <person name="Winkel B.S.J."/>
            <person name="Mohamed A."/>
            <person name="Cheng C.-L."/>
            <person name="Shih M.-C."/>
            <person name="Poulton J.E."/>
            <person name="Esen A."/>
        </authorList>
    </citation>
    <scope>GENE FAMILY</scope>
    <scope>NOMENCLATURE</scope>
</reference>
<reference key="4">
    <citation type="journal article" date="2006" name="Phytochemistry">
        <title>Arabidopsis thaliana beta-glucosidases BGLU45 and BGLU46 hydrolyse monolignol glucosides.</title>
        <authorList>
            <person name="Escamilla-Trevino L.L."/>
            <person name="Chen W."/>
            <person name="Card M.L."/>
            <person name="Shih M.-C."/>
            <person name="Cheng C.-L."/>
            <person name="Poulton J.E."/>
        </authorList>
    </citation>
    <scope>FUNCTION</scope>
    <scope>CATALYTIC ACTIVITY</scope>
    <scope>BIOPHYSICOCHEMICAL PROPERTIES</scope>
    <scope>TISSUE SPECIFICITY</scope>
</reference>